<feature type="chain" id="PRO_0000150552" description="Olfactory receptor 4K1">
    <location>
        <begin position="1"/>
        <end position="311"/>
    </location>
</feature>
<feature type="topological domain" description="Extracellular" evidence="1">
    <location>
        <begin position="1"/>
        <end position="25"/>
    </location>
</feature>
<feature type="transmembrane region" description="Helical; Name=1" evidence="1">
    <location>
        <begin position="26"/>
        <end position="49"/>
    </location>
</feature>
<feature type="topological domain" description="Cytoplasmic" evidence="1">
    <location>
        <begin position="50"/>
        <end position="57"/>
    </location>
</feature>
<feature type="transmembrane region" description="Helical; Name=2" evidence="1">
    <location>
        <begin position="58"/>
        <end position="79"/>
    </location>
</feature>
<feature type="topological domain" description="Extracellular" evidence="1">
    <location>
        <begin position="80"/>
        <end position="100"/>
    </location>
</feature>
<feature type="transmembrane region" description="Helical; Name=3" evidence="1">
    <location>
        <begin position="101"/>
        <end position="120"/>
    </location>
</feature>
<feature type="topological domain" description="Cytoplasmic" evidence="1">
    <location>
        <begin position="121"/>
        <end position="139"/>
    </location>
</feature>
<feature type="transmembrane region" description="Helical; Name=4" evidence="1">
    <location>
        <begin position="140"/>
        <end position="158"/>
    </location>
</feature>
<feature type="topological domain" description="Extracellular" evidence="1">
    <location>
        <begin position="159"/>
        <end position="195"/>
    </location>
</feature>
<feature type="transmembrane region" description="Helical; Name=5" evidence="1">
    <location>
        <begin position="196"/>
        <end position="219"/>
    </location>
</feature>
<feature type="topological domain" description="Cytoplasmic" evidence="1">
    <location>
        <begin position="220"/>
        <end position="235"/>
    </location>
</feature>
<feature type="transmembrane region" description="Helical; Name=6" evidence="1">
    <location>
        <begin position="236"/>
        <end position="258"/>
    </location>
</feature>
<feature type="topological domain" description="Extracellular" evidence="1">
    <location>
        <begin position="259"/>
        <end position="269"/>
    </location>
</feature>
<feature type="transmembrane region" description="Helical; Name=7" evidence="1">
    <location>
        <begin position="270"/>
        <end position="289"/>
    </location>
</feature>
<feature type="topological domain" description="Cytoplasmic" evidence="1">
    <location>
        <begin position="290"/>
        <end position="311"/>
    </location>
</feature>
<feature type="glycosylation site" description="N-linked (GlcNAc...) asparagine" evidence="1">
    <location>
        <position position="5"/>
    </location>
</feature>
<feature type="disulfide bond" evidence="2">
    <location>
        <begin position="97"/>
        <end position="189"/>
    </location>
</feature>
<feature type="sequence variant" id="VAR_054121" description="In dbSNP:rs12885778.">
    <original>R</original>
    <variation>H</variation>
    <location>
        <position position="89"/>
    </location>
</feature>
<feature type="sequence variant" id="VAR_054122" description="In dbSNP:rs3916626.">
    <original>R</original>
    <variation>Q</variation>
    <location>
        <position position="138"/>
    </location>
</feature>
<feature type="sequence variant" id="VAR_054123" description="In dbSNP:rs2792146." evidence="3 4 5">
    <original>R</original>
    <variation>H</variation>
    <location>
        <position position="304"/>
    </location>
</feature>
<evidence type="ECO:0000255" key="1"/>
<evidence type="ECO:0000255" key="2">
    <source>
        <dbReference type="PROSITE-ProRule" id="PRU00521"/>
    </source>
</evidence>
<evidence type="ECO:0000269" key="3">
    <source>
    </source>
</evidence>
<evidence type="ECO:0000269" key="4">
    <source ref="1"/>
</evidence>
<evidence type="ECO:0000269" key="5">
    <source ref="2"/>
</evidence>
<evidence type="ECO:0000305" key="6"/>
<dbReference type="EMBL" id="AB065879">
    <property type="protein sequence ID" value="BAC06097.1"/>
    <property type="molecule type" value="Genomic_DNA"/>
</dbReference>
<dbReference type="EMBL" id="AB065881">
    <property type="protein sequence ID" value="BAC06099.1"/>
    <property type="molecule type" value="Genomic_DNA"/>
</dbReference>
<dbReference type="EMBL" id="CH471078">
    <property type="protein sequence ID" value="EAW66494.1"/>
    <property type="molecule type" value="Genomic_DNA"/>
</dbReference>
<dbReference type="EMBL" id="BC151145">
    <property type="protein sequence ID" value="AAI51146.1"/>
    <property type="molecule type" value="mRNA"/>
</dbReference>
<dbReference type="EMBL" id="AF399570">
    <property type="protein sequence ID" value="AAK95055.1"/>
    <property type="molecule type" value="Genomic_DNA"/>
</dbReference>
<dbReference type="EMBL" id="BK004356">
    <property type="protein sequence ID" value="DAA04754.1"/>
    <property type="molecule type" value="Genomic_DNA"/>
</dbReference>
<dbReference type="CCDS" id="CCDS32025.1"/>
<dbReference type="RefSeq" id="NP_001004063.2">
    <property type="nucleotide sequence ID" value="NM_001004063.3"/>
</dbReference>
<dbReference type="RefSeq" id="XP_011535455.1">
    <property type="nucleotide sequence ID" value="XM_011537153.3"/>
</dbReference>
<dbReference type="RefSeq" id="XP_054189125.1">
    <property type="nucleotide sequence ID" value="XM_054333150.1"/>
</dbReference>
<dbReference type="SMR" id="Q8NGD4"/>
<dbReference type="BioGRID" id="122709">
    <property type="interactions" value="2"/>
</dbReference>
<dbReference type="FunCoup" id="Q8NGD4">
    <property type="interactions" value="416"/>
</dbReference>
<dbReference type="STRING" id="9606.ENSP00000493205"/>
<dbReference type="GlyCosmos" id="Q8NGD4">
    <property type="glycosylation" value="1 site, No reported glycans"/>
</dbReference>
<dbReference type="GlyGen" id="Q8NGD4">
    <property type="glycosylation" value="1 site"/>
</dbReference>
<dbReference type="BioMuta" id="OR4K1"/>
<dbReference type="DMDM" id="38372674"/>
<dbReference type="MassIVE" id="Q8NGD4"/>
<dbReference type="PaxDb" id="9606-ENSP00000285600"/>
<dbReference type="PeptideAtlas" id="Q8NGD4"/>
<dbReference type="Antibodypedia" id="21991">
    <property type="antibodies" value="80 antibodies from 20 providers"/>
</dbReference>
<dbReference type="DNASU" id="79544"/>
<dbReference type="Ensembl" id="ENST00000285600.4">
    <property type="protein sequence ID" value="ENSP00000285600.3"/>
    <property type="gene ID" value="ENSG00000155249.5"/>
</dbReference>
<dbReference type="Ensembl" id="ENST00000641172.1">
    <property type="protein sequence ID" value="ENSP00000493193.1"/>
    <property type="gene ID" value="ENSG00000155249.5"/>
</dbReference>
<dbReference type="Ensembl" id="ENST00000641429.1">
    <property type="protein sequence ID" value="ENSP00000493205.1"/>
    <property type="gene ID" value="ENSG00000155249.5"/>
</dbReference>
<dbReference type="Ensembl" id="ENST00000708840.1">
    <property type="protein sequence ID" value="ENSP00000517371.1"/>
    <property type="gene ID" value="ENSG00000291807.1"/>
</dbReference>
<dbReference type="Ensembl" id="ENST00000708841.1">
    <property type="protein sequence ID" value="ENSP00000517372.1"/>
    <property type="gene ID" value="ENSG00000291807.1"/>
</dbReference>
<dbReference type="Ensembl" id="ENST00000708842.1">
    <property type="protein sequence ID" value="ENSP00000517373.1"/>
    <property type="gene ID" value="ENSG00000291807.1"/>
</dbReference>
<dbReference type="GeneID" id="79544"/>
<dbReference type="KEGG" id="hsa:79544"/>
<dbReference type="MANE-Select" id="ENST00000641172.1">
    <property type="protein sequence ID" value="ENSP00000493193.1"/>
    <property type="RefSeq nucleotide sequence ID" value="NM_001004063.3"/>
    <property type="RefSeq protein sequence ID" value="NP_001004063.2"/>
</dbReference>
<dbReference type="UCSC" id="uc001vwj.2">
    <property type="organism name" value="human"/>
</dbReference>
<dbReference type="AGR" id="HGNC:14726"/>
<dbReference type="CTD" id="79544"/>
<dbReference type="GeneCards" id="OR4K1"/>
<dbReference type="HGNC" id="HGNC:14726">
    <property type="gene designation" value="OR4K1"/>
</dbReference>
<dbReference type="HPA" id="ENSG00000155249">
    <property type="expression patterns" value="Not detected"/>
</dbReference>
<dbReference type="neXtProt" id="NX_Q8NGD4"/>
<dbReference type="PharmGKB" id="PA32308"/>
<dbReference type="VEuPathDB" id="HostDB:ENSG00000155249"/>
<dbReference type="eggNOG" id="ENOG502SK03">
    <property type="taxonomic scope" value="Eukaryota"/>
</dbReference>
<dbReference type="GeneTree" id="ENSGT00940000162669"/>
<dbReference type="HOGENOM" id="CLU_012526_5_5_1"/>
<dbReference type="InParanoid" id="Q8NGD4"/>
<dbReference type="OMA" id="MLMDFFV"/>
<dbReference type="OrthoDB" id="6147321at2759"/>
<dbReference type="PAN-GO" id="Q8NGD4">
    <property type="GO annotations" value="2 GO annotations based on evolutionary models"/>
</dbReference>
<dbReference type="PhylomeDB" id="Q8NGD4"/>
<dbReference type="TreeFam" id="TF337251"/>
<dbReference type="PathwayCommons" id="Q8NGD4"/>
<dbReference type="Reactome" id="R-HSA-9752946">
    <property type="pathway name" value="Expression and translocation of olfactory receptors"/>
</dbReference>
<dbReference type="BioGRID-ORCS" id="79544">
    <property type="hits" value="120 hits in 739 CRISPR screens"/>
</dbReference>
<dbReference type="GeneWiki" id="OR4K1"/>
<dbReference type="GenomeRNAi" id="79544"/>
<dbReference type="Pharos" id="Q8NGD4">
    <property type="development level" value="Tdark"/>
</dbReference>
<dbReference type="PRO" id="PR:Q8NGD4"/>
<dbReference type="Proteomes" id="UP000005640">
    <property type="component" value="Chromosome 14"/>
</dbReference>
<dbReference type="RNAct" id="Q8NGD4">
    <property type="molecule type" value="protein"/>
</dbReference>
<dbReference type="Bgee" id="ENSG00000155249">
    <property type="expression patterns" value="Expressed in gall bladder"/>
</dbReference>
<dbReference type="GO" id="GO:0005886">
    <property type="term" value="C:plasma membrane"/>
    <property type="evidence" value="ECO:0007669"/>
    <property type="project" value="UniProtKB-SubCell"/>
</dbReference>
<dbReference type="GO" id="GO:0004930">
    <property type="term" value="F:G protein-coupled receptor activity"/>
    <property type="evidence" value="ECO:0007669"/>
    <property type="project" value="UniProtKB-KW"/>
</dbReference>
<dbReference type="GO" id="GO:0004984">
    <property type="term" value="F:olfactory receptor activity"/>
    <property type="evidence" value="ECO:0000318"/>
    <property type="project" value="GO_Central"/>
</dbReference>
<dbReference type="CDD" id="cd15226">
    <property type="entry name" value="7tmA_OR4-like"/>
    <property type="match status" value="1"/>
</dbReference>
<dbReference type="FunFam" id="1.20.1070.10:FF:000012">
    <property type="entry name" value="Olfactory receptor"/>
    <property type="match status" value="1"/>
</dbReference>
<dbReference type="Gene3D" id="1.20.1070.10">
    <property type="entry name" value="Rhodopsin 7-helix transmembrane proteins"/>
    <property type="match status" value="1"/>
</dbReference>
<dbReference type="InterPro" id="IPR000276">
    <property type="entry name" value="GPCR_Rhodpsn"/>
</dbReference>
<dbReference type="InterPro" id="IPR017452">
    <property type="entry name" value="GPCR_Rhodpsn_7TM"/>
</dbReference>
<dbReference type="InterPro" id="IPR000725">
    <property type="entry name" value="Olfact_rcpt"/>
</dbReference>
<dbReference type="InterPro" id="IPR050427">
    <property type="entry name" value="Olfactory_Receptors"/>
</dbReference>
<dbReference type="PANTHER" id="PTHR48002">
    <property type="entry name" value="OLFACTORY RECEPTOR"/>
    <property type="match status" value="1"/>
</dbReference>
<dbReference type="Pfam" id="PF13853">
    <property type="entry name" value="7tm_4"/>
    <property type="match status" value="1"/>
</dbReference>
<dbReference type="PRINTS" id="PR00237">
    <property type="entry name" value="GPCRRHODOPSN"/>
</dbReference>
<dbReference type="PRINTS" id="PR00245">
    <property type="entry name" value="OLFACTORYR"/>
</dbReference>
<dbReference type="SUPFAM" id="SSF81321">
    <property type="entry name" value="Family A G protein-coupled receptor-like"/>
    <property type="match status" value="1"/>
</dbReference>
<dbReference type="PROSITE" id="PS00237">
    <property type="entry name" value="G_PROTEIN_RECEP_F1_1"/>
    <property type="match status" value="1"/>
</dbReference>
<dbReference type="PROSITE" id="PS50262">
    <property type="entry name" value="G_PROTEIN_RECEP_F1_2"/>
    <property type="match status" value="1"/>
</dbReference>
<keyword id="KW-1003">Cell membrane</keyword>
<keyword id="KW-1015">Disulfide bond</keyword>
<keyword id="KW-0297">G-protein coupled receptor</keyword>
<keyword id="KW-0325">Glycoprotein</keyword>
<keyword id="KW-0472">Membrane</keyword>
<keyword id="KW-0552">Olfaction</keyword>
<keyword id="KW-0675">Receptor</keyword>
<keyword id="KW-1185">Reference proteome</keyword>
<keyword id="KW-0716">Sensory transduction</keyword>
<keyword id="KW-0807">Transducer</keyword>
<keyword id="KW-0812">Transmembrane</keyword>
<keyword id="KW-1133">Transmembrane helix</keyword>
<sequence>MAHTNESMVSEFVLLGLSNSWGLQLFFFAIFSIVYVTSVLGNVLIIVIISFDSHLNSPMYFLLSNLSFIDICQSNFATPKMLVDFFIERKTISFEGCMAQIFVLHSFVGSEMMLLVAMAYDRFIAICKPLHYSTIMNRRLCVIFVSISWAVGVLHSVSHLAFTVDLPFCGPNEVDSFFCDLPLVIELACMDTYEMEIMTLTNSGLISLSCFLALIISYTIILIGVRCRSSSGSSKALSTLTAHITVVILFFGPCIYFYIWPFSRLPVDKFLSVFYTVCTPLLNPIIYSLRNEDVKAAMWKLRNRHVNSWKN</sequence>
<reference key="1">
    <citation type="submission" date="2001-07" db="EMBL/GenBank/DDBJ databases">
        <title>Genome-wide discovery and analysis of human seven transmembrane helix receptor genes.</title>
        <authorList>
            <person name="Suwa M."/>
            <person name="Sato T."/>
            <person name="Okouchi I."/>
            <person name="Arita M."/>
            <person name="Futami K."/>
            <person name="Matsumoto S."/>
            <person name="Tsutsumi S."/>
            <person name="Aburatani H."/>
            <person name="Asai K."/>
            <person name="Akiyama Y."/>
        </authorList>
    </citation>
    <scope>NUCLEOTIDE SEQUENCE [GENOMIC DNA]</scope>
    <scope>VARIANT HIS-304</scope>
</reference>
<reference key="2">
    <citation type="submission" date="2005-09" db="EMBL/GenBank/DDBJ databases">
        <authorList>
            <person name="Mural R.J."/>
            <person name="Istrail S."/>
            <person name="Sutton G.G."/>
            <person name="Florea L."/>
            <person name="Halpern A.L."/>
            <person name="Mobarry C.M."/>
            <person name="Lippert R."/>
            <person name="Walenz B."/>
            <person name="Shatkay H."/>
            <person name="Dew I."/>
            <person name="Miller J.R."/>
            <person name="Flanigan M.J."/>
            <person name="Edwards N.J."/>
            <person name="Bolanos R."/>
            <person name="Fasulo D."/>
            <person name="Halldorsson B.V."/>
            <person name="Hannenhalli S."/>
            <person name="Turner R."/>
            <person name="Yooseph S."/>
            <person name="Lu F."/>
            <person name="Nusskern D.R."/>
            <person name="Shue B.C."/>
            <person name="Zheng X.H."/>
            <person name="Zhong F."/>
            <person name="Delcher A.L."/>
            <person name="Huson D.H."/>
            <person name="Kravitz S.A."/>
            <person name="Mouchard L."/>
            <person name="Reinert K."/>
            <person name="Remington K.A."/>
            <person name="Clark A.G."/>
            <person name="Waterman M.S."/>
            <person name="Eichler E.E."/>
            <person name="Adams M.D."/>
            <person name="Hunkapiller M.W."/>
            <person name="Myers E.W."/>
            <person name="Venter J.C."/>
        </authorList>
    </citation>
    <scope>NUCLEOTIDE SEQUENCE [LARGE SCALE GENOMIC DNA]</scope>
    <scope>VARIANT HIS-304</scope>
</reference>
<reference key="3">
    <citation type="journal article" date="2004" name="Genome Res.">
        <title>The status, quality, and expansion of the NIH full-length cDNA project: the Mammalian Gene Collection (MGC).</title>
        <authorList>
            <consortium name="The MGC Project Team"/>
        </authorList>
    </citation>
    <scope>NUCLEOTIDE SEQUENCE [LARGE SCALE MRNA]</scope>
    <scope>VARIANT HIS-304</scope>
    <source>
        <tissue>Testis</tissue>
    </source>
</reference>
<reference key="4">
    <citation type="journal article" date="2002" name="Genomics">
        <title>DEFOG: a practical scheme for deciphering families of genes.</title>
        <authorList>
            <person name="Fuchs T."/>
            <person name="Malecova B."/>
            <person name="Linhart C."/>
            <person name="Sharan R."/>
            <person name="Khen M."/>
            <person name="Herwig R."/>
            <person name="Shmulevich D."/>
            <person name="Elkon R."/>
            <person name="Steinfath M."/>
            <person name="O'Brien J.K."/>
            <person name="Radelof U."/>
            <person name="Lehrach H."/>
            <person name="Lancet D."/>
            <person name="Shamir R."/>
        </authorList>
    </citation>
    <scope>NUCLEOTIDE SEQUENCE [GENOMIC DNA] OF 68-280</scope>
</reference>
<reference key="5">
    <citation type="journal article" date="2004" name="Proc. Natl. Acad. Sci. U.S.A.">
        <title>The human olfactory receptor gene family.</title>
        <authorList>
            <person name="Malnic B."/>
            <person name="Godfrey P.A."/>
            <person name="Buck L.B."/>
        </authorList>
    </citation>
    <scope>IDENTIFICATION</scope>
</reference>
<reference key="6">
    <citation type="journal article" date="2004" name="Proc. Natl. Acad. Sci. U.S.A.">
        <authorList>
            <person name="Malnic B."/>
            <person name="Godfrey P.A."/>
            <person name="Buck L.B."/>
        </authorList>
    </citation>
    <scope>ERRATUM OF PUBMED:14983052</scope>
</reference>
<organism>
    <name type="scientific">Homo sapiens</name>
    <name type="common">Human</name>
    <dbReference type="NCBI Taxonomy" id="9606"/>
    <lineage>
        <taxon>Eukaryota</taxon>
        <taxon>Metazoa</taxon>
        <taxon>Chordata</taxon>
        <taxon>Craniata</taxon>
        <taxon>Vertebrata</taxon>
        <taxon>Euteleostomi</taxon>
        <taxon>Mammalia</taxon>
        <taxon>Eutheria</taxon>
        <taxon>Euarchontoglires</taxon>
        <taxon>Primates</taxon>
        <taxon>Haplorrhini</taxon>
        <taxon>Catarrhini</taxon>
        <taxon>Hominidae</taxon>
        <taxon>Homo</taxon>
    </lineage>
</organism>
<gene>
    <name type="primary">OR4K1</name>
</gene>
<name>OR4K1_HUMAN</name>
<protein>
    <recommendedName>
        <fullName>Olfactory receptor 4K1</fullName>
    </recommendedName>
    <alternativeName>
        <fullName>Olfactory receptor OR14-19</fullName>
    </alternativeName>
</protein>
<comment type="function">
    <text evidence="6">Odorant receptor.</text>
</comment>
<comment type="subcellular location">
    <subcellularLocation>
        <location>Cell membrane</location>
        <topology>Multi-pass membrane protein</topology>
    </subcellularLocation>
</comment>
<comment type="similarity">
    <text evidence="2">Belongs to the G-protein coupled receptor 1 family.</text>
</comment>
<comment type="online information" name="Human Olfactory Receptor Data Exploratorium (HORDE)">
    <link uri="http://genome.weizmann.ac.il/horde/card/index/symbol:OR4K1"/>
</comment>
<proteinExistence type="evidence at transcript level"/>
<accession>Q8NGD4</accession>
<accession>B9EKV9</accession>
<accession>Q8NGD6</accession>
<accession>Q96R73</accession>